<evidence type="ECO:0000255" key="1"/>
<evidence type="ECO:0000256" key="2">
    <source>
        <dbReference type="SAM" id="MobiDB-lite"/>
    </source>
</evidence>
<evidence type="ECO:0000305" key="3"/>
<name>HTRAL_STAA3</name>
<feature type="chain" id="PRO_0000252462" description="Serine protease HtrA-like">
    <location>
        <begin position="1"/>
        <end position="769"/>
    </location>
</feature>
<feature type="transmembrane region" description="Helical" evidence="1">
    <location>
        <begin position="410"/>
        <end position="430"/>
    </location>
</feature>
<feature type="domain" description="PDZ">
    <location>
        <begin position="680"/>
        <end position="733"/>
    </location>
</feature>
<feature type="region of interest" description="Disordered" evidence="2">
    <location>
        <begin position="1"/>
        <end position="390"/>
    </location>
</feature>
<feature type="compositionally biased region" description="Basic residues" evidence="2">
    <location>
        <begin position="1"/>
        <end position="20"/>
    </location>
</feature>
<feature type="compositionally biased region" description="Basic and acidic residues" evidence="2">
    <location>
        <begin position="21"/>
        <end position="64"/>
    </location>
</feature>
<feature type="compositionally biased region" description="Basic and acidic residues" evidence="2">
    <location>
        <begin position="71"/>
        <end position="108"/>
    </location>
</feature>
<feature type="compositionally biased region" description="Polar residues" evidence="2">
    <location>
        <begin position="126"/>
        <end position="137"/>
    </location>
</feature>
<feature type="compositionally biased region" description="Basic and acidic residues" evidence="2">
    <location>
        <begin position="138"/>
        <end position="186"/>
    </location>
</feature>
<feature type="compositionally biased region" description="Polar residues" evidence="2">
    <location>
        <begin position="247"/>
        <end position="262"/>
    </location>
</feature>
<feature type="compositionally biased region" description="Basic and acidic residues" evidence="2">
    <location>
        <begin position="264"/>
        <end position="296"/>
    </location>
</feature>
<feature type="compositionally biased region" description="Basic and acidic residues" evidence="2">
    <location>
        <begin position="310"/>
        <end position="330"/>
    </location>
</feature>
<feature type="compositionally biased region" description="Polar residues" evidence="2">
    <location>
        <begin position="331"/>
        <end position="347"/>
    </location>
</feature>
<feature type="compositionally biased region" description="Basic and acidic residues" evidence="2">
    <location>
        <begin position="348"/>
        <end position="364"/>
    </location>
</feature>
<feature type="compositionally biased region" description="Polar residues" evidence="2">
    <location>
        <begin position="365"/>
        <end position="390"/>
    </location>
</feature>
<feature type="active site" description="Charge relay system" evidence="1">
    <location>
        <position position="504"/>
    </location>
</feature>
<feature type="active site" description="Charge relay system" evidence="1">
    <location>
        <position position="534"/>
    </location>
</feature>
<feature type="active site" description="Charge relay system" evidence="1">
    <location>
        <position position="619"/>
    </location>
</feature>
<comment type="subcellular location">
    <subcellularLocation>
        <location evidence="3">Cell membrane</location>
        <topology evidence="3">Single-pass membrane protein</topology>
    </subcellularLocation>
</comment>
<comment type="similarity">
    <text evidence="3">Belongs to the peptidase S1C family.</text>
</comment>
<gene>
    <name type="ordered locus">SAUSA300_0923</name>
</gene>
<accession>Q2FI55</accession>
<dbReference type="EC" id="3.4.21.-"/>
<dbReference type="EMBL" id="CP000255">
    <property type="protein sequence ID" value="ABD20429.1"/>
    <property type="molecule type" value="Genomic_DNA"/>
</dbReference>
<dbReference type="SMR" id="Q2FI55"/>
<dbReference type="KEGG" id="saa:SAUSA300_0923"/>
<dbReference type="HOGENOM" id="CLU_027421_0_0_9"/>
<dbReference type="OMA" id="KRNMAIN"/>
<dbReference type="Proteomes" id="UP000001939">
    <property type="component" value="Chromosome"/>
</dbReference>
<dbReference type="GO" id="GO:0005886">
    <property type="term" value="C:plasma membrane"/>
    <property type="evidence" value="ECO:0007669"/>
    <property type="project" value="UniProtKB-SubCell"/>
</dbReference>
<dbReference type="GO" id="GO:0004252">
    <property type="term" value="F:serine-type endopeptidase activity"/>
    <property type="evidence" value="ECO:0007669"/>
    <property type="project" value="InterPro"/>
</dbReference>
<dbReference type="GO" id="GO:0006508">
    <property type="term" value="P:proteolysis"/>
    <property type="evidence" value="ECO:0007669"/>
    <property type="project" value="UniProtKB-KW"/>
</dbReference>
<dbReference type="CDD" id="cd06781">
    <property type="entry name" value="cpPDZ_BsHtra-like"/>
    <property type="match status" value="1"/>
</dbReference>
<dbReference type="Gene3D" id="2.30.42.10">
    <property type="match status" value="1"/>
</dbReference>
<dbReference type="Gene3D" id="2.40.10.10">
    <property type="entry name" value="Trypsin-like serine proteases"/>
    <property type="match status" value="2"/>
</dbReference>
<dbReference type="InterPro" id="IPR051201">
    <property type="entry name" value="Chloro_Bact_Ser_Proteases"/>
</dbReference>
<dbReference type="InterPro" id="IPR001478">
    <property type="entry name" value="PDZ"/>
</dbReference>
<dbReference type="InterPro" id="IPR036034">
    <property type="entry name" value="PDZ_sf"/>
</dbReference>
<dbReference type="InterPro" id="IPR009003">
    <property type="entry name" value="Peptidase_S1_PA"/>
</dbReference>
<dbReference type="InterPro" id="IPR043504">
    <property type="entry name" value="Peptidase_S1_PA_chymotrypsin"/>
</dbReference>
<dbReference type="InterPro" id="IPR001940">
    <property type="entry name" value="Peptidase_S1C"/>
</dbReference>
<dbReference type="PANTHER" id="PTHR43343">
    <property type="entry name" value="PEPTIDASE S12"/>
    <property type="match status" value="1"/>
</dbReference>
<dbReference type="PANTHER" id="PTHR43343:SF3">
    <property type="entry name" value="PROTEASE DO-LIKE 8, CHLOROPLASTIC"/>
    <property type="match status" value="1"/>
</dbReference>
<dbReference type="Pfam" id="PF13180">
    <property type="entry name" value="PDZ_2"/>
    <property type="match status" value="1"/>
</dbReference>
<dbReference type="Pfam" id="PF13365">
    <property type="entry name" value="Trypsin_2"/>
    <property type="match status" value="1"/>
</dbReference>
<dbReference type="PRINTS" id="PR00834">
    <property type="entry name" value="PROTEASES2C"/>
</dbReference>
<dbReference type="SMART" id="SM00228">
    <property type="entry name" value="PDZ"/>
    <property type="match status" value="1"/>
</dbReference>
<dbReference type="SUPFAM" id="SSF50156">
    <property type="entry name" value="PDZ domain-like"/>
    <property type="match status" value="1"/>
</dbReference>
<dbReference type="SUPFAM" id="SSF50494">
    <property type="entry name" value="Trypsin-like serine proteases"/>
    <property type="match status" value="1"/>
</dbReference>
<protein>
    <recommendedName>
        <fullName>Serine protease HtrA-like</fullName>
        <ecNumber>3.4.21.-</ecNumber>
    </recommendedName>
</protein>
<reference key="1">
    <citation type="journal article" date="2006" name="Lancet">
        <title>Complete genome sequence of USA300, an epidemic clone of community-acquired meticillin-resistant Staphylococcus aureus.</title>
        <authorList>
            <person name="Diep B.A."/>
            <person name="Gill S.R."/>
            <person name="Chang R.F."/>
            <person name="Phan T.H."/>
            <person name="Chen J.H."/>
            <person name="Davidson M.G."/>
            <person name="Lin F."/>
            <person name="Lin J."/>
            <person name="Carleton H.A."/>
            <person name="Mongodin E.F."/>
            <person name="Sensabaugh G.F."/>
            <person name="Perdreau-Remington F."/>
        </authorList>
    </citation>
    <scope>NUCLEOTIDE SEQUENCE [LARGE SCALE GENOMIC DNA]</scope>
    <source>
        <strain>USA300</strain>
    </source>
</reference>
<sequence length="769" mass="86402">MDIGKKHVIPKSQYRRKRREFFHNEDREENLNQHQDKQNIDNTTSKKADKQIHKDSIDKHERFKNSLSSHLEQRNRDVNENKAEESKSNQDSKSAYNRDHYLTDDVSKKQNSLDSVDQDTVKSKYYEQNSEATLSTKSTDKVESTEMRKLSSDKNKVGHEEQHVLSKPSEHDKETRIDSESSRTDSDSSMQTEKIKKDSSDGNKSSNLKSEVISDKSNTVPKLSESDDEVNNQKPLTLPEEQKLKRQQSQNEQTKTYTYGDSEQNDKSNHENDLSHHIPSISDDKDNVMRENHIVDDNPDNDINTPSLSKTDDDRKLDEKIHVEDKHKQNADSSETVGYQSQSTASHRSTEKRNISINDHDKLNGQKTNTKTSANNNQKKATSKLNKGRATNNNYSDILKKFWMMYWPKLVILMGIIILIVILNAIFNNVNKNDRMNDNNDADAQKYTTTMKNANNTVKSVVTVENETSKDSSLPKDKASQDEVGSGVVYKKSGDTLYIVTNAHVVGDKENQKITFSNNKSVVGKVLGKDKWSDLAVVKATSSDSSVKEIAIGDSNNLVLGEPILVVGNPLGVDFKGTVTEGIISGLNRNVPIDFDKDNKYDMLMKAFQIDASVNPGNSGGAVVNREGKLIGVVAAKISMPNVENMSFAIPVNEVQKIVKDLETKGKIDYPDVGVKMKNIASLNSFERQAVKLPGKVKNGVVVDQVDNNGLADQSGLKKGDVITELDGKLLEDDLRFRQIIFSHKDDLKSITAKIYRDGKEKEINIKLK</sequence>
<keyword id="KW-1003">Cell membrane</keyword>
<keyword id="KW-0378">Hydrolase</keyword>
<keyword id="KW-0472">Membrane</keyword>
<keyword id="KW-0645">Protease</keyword>
<keyword id="KW-0720">Serine protease</keyword>
<keyword id="KW-0812">Transmembrane</keyword>
<keyword id="KW-1133">Transmembrane helix</keyword>
<organism>
    <name type="scientific">Staphylococcus aureus (strain USA300)</name>
    <dbReference type="NCBI Taxonomy" id="367830"/>
    <lineage>
        <taxon>Bacteria</taxon>
        <taxon>Bacillati</taxon>
        <taxon>Bacillota</taxon>
        <taxon>Bacilli</taxon>
        <taxon>Bacillales</taxon>
        <taxon>Staphylococcaceae</taxon>
        <taxon>Staphylococcus</taxon>
    </lineage>
</organism>
<proteinExistence type="inferred from homology"/>